<feature type="chain" id="PRO_0000297636" description="Ras-GEF domain-containing family member 1A">
    <location>
        <begin position="1"/>
        <end position="475"/>
    </location>
</feature>
<feature type="domain" description="N-terminal Ras-GEF" evidence="2">
    <location>
        <begin position="33"/>
        <end position="164"/>
    </location>
</feature>
<feature type="domain" description="Ras-GEF" evidence="3">
    <location>
        <begin position="208"/>
        <end position="455"/>
    </location>
</feature>
<accession>A0JM95</accession>
<reference key="1">
    <citation type="submission" date="2006-10" db="EMBL/GenBank/DDBJ databases">
        <authorList>
            <consortium name="NIH - Xenopus Gene Collection (XGC) project"/>
        </authorList>
    </citation>
    <scope>NUCLEOTIDE SEQUENCE [LARGE SCALE MRNA]</scope>
    <source>
        <strain>N6</strain>
        <tissue>Spleen</tissue>
    </source>
</reference>
<proteinExistence type="evidence at transcript level"/>
<evidence type="ECO:0000250" key="1"/>
<evidence type="ECO:0000255" key="2">
    <source>
        <dbReference type="PROSITE-ProRule" id="PRU00135"/>
    </source>
</evidence>
<evidence type="ECO:0000255" key="3">
    <source>
        <dbReference type="PROSITE-ProRule" id="PRU00168"/>
    </source>
</evidence>
<sequence length="475" mass="54787">MPQTPIFPSMLGSTCSGQVQPEMGEHCGDPVYQDGSLVSGSLEVLIERLVPTLDYYPDKTYIFTFLLSARIFIHPYEILAKVGQMCIKQKQQLESGSEADKAKLKSFAAKIIQLLREWTETFPFDFQDERARKEMKEIAQRITQCDEENGTIKKSISQMTQNVLVVLSTRGQFQEVREKIRQPVSDKGTILKTKPQSAQKDILSVCSDPLILAQQLTTIELERLGNIFPEDLMQIISHMDSLDNHKCRSDVTKTYNLEAYDNWFNCLSMLVATEICKVVKKKQRTRVMEFFIDVARECFNIGNFNSMMAIISGMNLSPVARLKKTWSKVKTAKFDVLEHHMDPSSNFCNYRTALQGATQRSQSANSSREKIVIPVFNLFIKDIFFLHKIHSNRLPNGHINFKKFWEISRQIHDFLTWKQVECPYEKDKKIQTYLLTTPIYTEEALFLASFENEGPDNHMEKDSWKTLRSTLLNRA</sequence>
<gene>
    <name type="primary">rasgef1a</name>
</gene>
<protein>
    <recommendedName>
        <fullName>Ras-GEF domain-containing family member 1A</fullName>
    </recommendedName>
</protein>
<organism>
    <name type="scientific">Xenopus tropicalis</name>
    <name type="common">Western clawed frog</name>
    <name type="synonym">Silurana tropicalis</name>
    <dbReference type="NCBI Taxonomy" id="8364"/>
    <lineage>
        <taxon>Eukaryota</taxon>
        <taxon>Metazoa</taxon>
        <taxon>Chordata</taxon>
        <taxon>Craniata</taxon>
        <taxon>Vertebrata</taxon>
        <taxon>Euteleostomi</taxon>
        <taxon>Amphibia</taxon>
        <taxon>Batrachia</taxon>
        <taxon>Anura</taxon>
        <taxon>Pipoidea</taxon>
        <taxon>Pipidae</taxon>
        <taxon>Xenopodinae</taxon>
        <taxon>Xenopus</taxon>
        <taxon>Silurana</taxon>
    </lineage>
</organism>
<dbReference type="EMBL" id="BC125791">
    <property type="protein sequence ID" value="AAI25792.1"/>
    <property type="molecule type" value="mRNA"/>
</dbReference>
<dbReference type="RefSeq" id="NP_001039175.2">
    <property type="nucleotide sequence ID" value="NM_001045710.2"/>
</dbReference>
<dbReference type="RefSeq" id="XP_012822159.1">
    <property type="nucleotide sequence ID" value="XM_012966705.2"/>
</dbReference>
<dbReference type="RefSeq" id="XP_031761013.1">
    <property type="nucleotide sequence ID" value="XM_031905153.1"/>
</dbReference>
<dbReference type="RefSeq" id="XP_031761014.1">
    <property type="nucleotide sequence ID" value="XM_031905154.1"/>
</dbReference>
<dbReference type="SMR" id="A0JM95"/>
<dbReference type="FunCoup" id="A0JM95">
    <property type="interactions" value="661"/>
</dbReference>
<dbReference type="STRING" id="8364.ENSXETP00000019561"/>
<dbReference type="PaxDb" id="8364-ENSXETP00000001335"/>
<dbReference type="DNASU" id="734010"/>
<dbReference type="GeneID" id="734010"/>
<dbReference type="KEGG" id="xtr:734010"/>
<dbReference type="AGR" id="Xenbase:XB-GENE-5739365"/>
<dbReference type="CTD" id="221002"/>
<dbReference type="Xenbase" id="XB-GENE-5739365">
    <property type="gene designation" value="rasgef1a"/>
</dbReference>
<dbReference type="eggNOG" id="KOG3541">
    <property type="taxonomic scope" value="Eukaryota"/>
</dbReference>
<dbReference type="HOGENOM" id="CLU_022907_2_0_1"/>
<dbReference type="InParanoid" id="A0JM95"/>
<dbReference type="OMA" id="IAKECCE"/>
<dbReference type="OrthoDB" id="20825at2759"/>
<dbReference type="TreeFam" id="TF313379"/>
<dbReference type="Reactome" id="R-XTR-5673001">
    <property type="pathway name" value="RAF/MAP kinase cascade"/>
</dbReference>
<dbReference type="Proteomes" id="UP000008143">
    <property type="component" value="Chromosome 7"/>
</dbReference>
<dbReference type="Bgee" id="ENSXETG00000000607">
    <property type="expression patterns" value="Expressed in brain and 9 other cell types or tissues"/>
</dbReference>
<dbReference type="ExpressionAtlas" id="A0JM95">
    <property type="expression patterns" value="baseline"/>
</dbReference>
<dbReference type="GO" id="GO:0005085">
    <property type="term" value="F:guanyl-nucleotide exchange factor activity"/>
    <property type="evidence" value="ECO:0000250"/>
    <property type="project" value="UniProtKB"/>
</dbReference>
<dbReference type="GO" id="GO:0016477">
    <property type="term" value="P:cell migration"/>
    <property type="evidence" value="ECO:0000250"/>
    <property type="project" value="UniProtKB"/>
</dbReference>
<dbReference type="GO" id="GO:0007264">
    <property type="term" value="P:small GTPase-mediated signal transduction"/>
    <property type="evidence" value="ECO:0007669"/>
    <property type="project" value="InterPro"/>
</dbReference>
<dbReference type="CDD" id="cd00155">
    <property type="entry name" value="RasGEF"/>
    <property type="match status" value="1"/>
</dbReference>
<dbReference type="CDD" id="cd06224">
    <property type="entry name" value="REM"/>
    <property type="match status" value="1"/>
</dbReference>
<dbReference type="FunFam" id="1.10.840.10:FF:000008">
    <property type="entry name" value="Ras-GEF domain-containing family member 1B"/>
    <property type="match status" value="1"/>
</dbReference>
<dbReference type="FunFam" id="1.20.870.10:FF:000007">
    <property type="entry name" value="Ras-GEF domain-containing family member 1B"/>
    <property type="match status" value="1"/>
</dbReference>
<dbReference type="Gene3D" id="1.10.840.10">
    <property type="entry name" value="Ras guanine-nucleotide exchange factors catalytic domain"/>
    <property type="match status" value="1"/>
</dbReference>
<dbReference type="Gene3D" id="1.20.870.10">
    <property type="entry name" value="Son of sevenless (SoS) protein Chain: S domain 1"/>
    <property type="match status" value="1"/>
</dbReference>
<dbReference type="InterPro" id="IPR008937">
    <property type="entry name" value="Ras-like_GEF"/>
</dbReference>
<dbReference type="InterPro" id="IPR000651">
    <property type="entry name" value="Ras-like_Gua-exchang_fac_N"/>
</dbReference>
<dbReference type="InterPro" id="IPR023578">
    <property type="entry name" value="Ras_GEF_dom_sf"/>
</dbReference>
<dbReference type="InterPro" id="IPR001895">
    <property type="entry name" value="RASGEF_cat_dom"/>
</dbReference>
<dbReference type="InterPro" id="IPR036964">
    <property type="entry name" value="RASGEF_cat_dom_sf"/>
</dbReference>
<dbReference type="PANTHER" id="PTHR23113">
    <property type="entry name" value="GUANINE NUCLEOTIDE EXCHANGE FACTOR"/>
    <property type="match status" value="1"/>
</dbReference>
<dbReference type="PANTHER" id="PTHR23113:SF172">
    <property type="entry name" value="RAS-GEF DOMAIN-CONTAINING FAMILY MEMBER 1A"/>
    <property type="match status" value="1"/>
</dbReference>
<dbReference type="Pfam" id="PF00617">
    <property type="entry name" value="RasGEF"/>
    <property type="match status" value="1"/>
</dbReference>
<dbReference type="Pfam" id="PF00618">
    <property type="entry name" value="RasGEF_N"/>
    <property type="match status" value="1"/>
</dbReference>
<dbReference type="SMART" id="SM00147">
    <property type="entry name" value="RasGEF"/>
    <property type="match status" value="1"/>
</dbReference>
<dbReference type="SMART" id="SM00229">
    <property type="entry name" value="RasGEFN"/>
    <property type="match status" value="1"/>
</dbReference>
<dbReference type="SUPFAM" id="SSF48366">
    <property type="entry name" value="Ras GEF"/>
    <property type="match status" value="1"/>
</dbReference>
<dbReference type="PROSITE" id="PS50009">
    <property type="entry name" value="RASGEF_CAT"/>
    <property type="match status" value="1"/>
</dbReference>
<dbReference type="PROSITE" id="PS50212">
    <property type="entry name" value="RASGEF_NTER"/>
    <property type="match status" value="1"/>
</dbReference>
<name>RGF1A_XENTR</name>
<keyword id="KW-0344">Guanine-nucleotide releasing factor</keyword>
<keyword id="KW-1185">Reference proteome</keyword>
<comment type="function">
    <text evidence="1">Guanine nucleotide exchange factor (GEF) with specificity for rap2a and other Ras family proteins (in vitro). Plays a role in cell migration (By similarity).</text>
</comment>